<name>RL9_BORBZ</name>
<feature type="chain" id="PRO_1000126871" description="Large ribosomal subunit protein bL9">
    <location>
        <begin position="1"/>
        <end position="173"/>
    </location>
</feature>
<feature type="region of interest" description="Disordered" evidence="2">
    <location>
        <begin position="150"/>
        <end position="173"/>
    </location>
</feature>
<sequence>MKVILKEDFINLGKEGDTVEVRDGFARNYLLPKGFAVFSNKHNIEIFNQKRRSILKKQEAKKQMANDLKSKLDLVKLEFFMKSNDSGKLFHSINSLNIADELLKLGFDIERKKIDIHHGTLKTFGTYDVTIKLYEGISSIIKVEIKKEKKQEDKKSLSKKLNKADEQGERAEV</sequence>
<gene>
    <name evidence="1" type="primary">rplI</name>
    <name type="ordered locus">BbuZS7_0112</name>
</gene>
<accession>B7J145</accession>
<organism>
    <name type="scientific">Borreliella burgdorferi (strain ZS7)</name>
    <name type="common">Borrelia burgdorferi</name>
    <dbReference type="NCBI Taxonomy" id="445985"/>
    <lineage>
        <taxon>Bacteria</taxon>
        <taxon>Pseudomonadati</taxon>
        <taxon>Spirochaetota</taxon>
        <taxon>Spirochaetia</taxon>
        <taxon>Spirochaetales</taxon>
        <taxon>Borreliaceae</taxon>
        <taxon>Borreliella</taxon>
    </lineage>
</organism>
<reference key="1">
    <citation type="journal article" date="2011" name="J. Bacteriol.">
        <title>Whole-genome sequences of thirteen isolates of Borrelia burgdorferi.</title>
        <authorList>
            <person name="Schutzer S.E."/>
            <person name="Fraser-Liggett C.M."/>
            <person name="Casjens S.R."/>
            <person name="Qiu W.G."/>
            <person name="Dunn J.J."/>
            <person name="Mongodin E.F."/>
            <person name="Luft B.J."/>
        </authorList>
    </citation>
    <scope>NUCLEOTIDE SEQUENCE [LARGE SCALE GENOMIC DNA]</scope>
    <source>
        <strain>ZS7</strain>
    </source>
</reference>
<keyword id="KW-0687">Ribonucleoprotein</keyword>
<keyword id="KW-0689">Ribosomal protein</keyword>
<keyword id="KW-0694">RNA-binding</keyword>
<keyword id="KW-0699">rRNA-binding</keyword>
<protein>
    <recommendedName>
        <fullName evidence="1">Large ribosomal subunit protein bL9</fullName>
    </recommendedName>
    <alternativeName>
        <fullName evidence="3">50S ribosomal protein L9</fullName>
    </alternativeName>
</protein>
<dbReference type="EMBL" id="CP001205">
    <property type="protein sequence ID" value="ACK74422.1"/>
    <property type="molecule type" value="Genomic_DNA"/>
</dbReference>
<dbReference type="RefSeq" id="WP_002656726.1">
    <property type="nucleotide sequence ID" value="NC_011728.1"/>
</dbReference>
<dbReference type="SMR" id="B7J145"/>
<dbReference type="GeneID" id="56568106"/>
<dbReference type="KEGG" id="bbz:BbuZS7_0112"/>
<dbReference type="HOGENOM" id="CLU_078938_4_1_12"/>
<dbReference type="Proteomes" id="UP000006901">
    <property type="component" value="Chromosome"/>
</dbReference>
<dbReference type="GO" id="GO:1990904">
    <property type="term" value="C:ribonucleoprotein complex"/>
    <property type="evidence" value="ECO:0007669"/>
    <property type="project" value="UniProtKB-KW"/>
</dbReference>
<dbReference type="GO" id="GO:0005840">
    <property type="term" value="C:ribosome"/>
    <property type="evidence" value="ECO:0007669"/>
    <property type="project" value="UniProtKB-KW"/>
</dbReference>
<dbReference type="GO" id="GO:0019843">
    <property type="term" value="F:rRNA binding"/>
    <property type="evidence" value="ECO:0007669"/>
    <property type="project" value="UniProtKB-UniRule"/>
</dbReference>
<dbReference type="GO" id="GO:0003735">
    <property type="term" value="F:structural constituent of ribosome"/>
    <property type="evidence" value="ECO:0007669"/>
    <property type="project" value="InterPro"/>
</dbReference>
<dbReference type="GO" id="GO:0006412">
    <property type="term" value="P:translation"/>
    <property type="evidence" value="ECO:0007669"/>
    <property type="project" value="UniProtKB-UniRule"/>
</dbReference>
<dbReference type="FunFam" id="3.10.430.100:FF:000017">
    <property type="entry name" value="50S ribosomal protein L9"/>
    <property type="match status" value="1"/>
</dbReference>
<dbReference type="FunFam" id="3.40.5.10:FF:000003">
    <property type="entry name" value="50S ribosomal protein L9"/>
    <property type="match status" value="1"/>
</dbReference>
<dbReference type="Gene3D" id="3.10.430.100">
    <property type="entry name" value="Ribosomal protein L9, C-terminal domain"/>
    <property type="match status" value="1"/>
</dbReference>
<dbReference type="Gene3D" id="3.40.5.10">
    <property type="entry name" value="Ribosomal protein L9, N-terminal domain"/>
    <property type="match status" value="1"/>
</dbReference>
<dbReference type="HAMAP" id="MF_00503">
    <property type="entry name" value="Ribosomal_bL9"/>
    <property type="match status" value="1"/>
</dbReference>
<dbReference type="InterPro" id="IPR000244">
    <property type="entry name" value="Ribosomal_bL9"/>
</dbReference>
<dbReference type="InterPro" id="IPR009027">
    <property type="entry name" value="Ribosomal_bL9/RNase_H1_N"/>
</dbReference>
<dbReference type="InterPro" id="IPR020594">
    <property type="entry name" value="Ribosomal_bL9_bac/chp"/>
</dbReference>
<dbReference type="InterPro" id="IPR020069">
    <property type="entry name" value="Ribosomal_bL9_C"/>
</dbReference>
<dbReference type="InterPro" id="IPR036791">
    <property type="entry name" value="Ribosomal_bL9_C_sf"/>
</dbReference>
<dbReference type="InterPro" id="IPR020070">
    <property type="entry name" value="Ribosomal_bL9_N"/>
</dbReference>
<dbReference type="InterPro" id="IPR036935">
    <property type="entry name" value="Ribosomal_bL9_N_sf"/>
</dbReference>
<dbReference type="NCBIfam" id="TIGR00158">
    <property type="entry name" value="L9"/>
    <property type="match status" value="1"/>
</dbReference>
<dbReference type="PANTHER" id="PTHR21368">
    <property type="entry name" value="50S RIBOSOMAL PROTEIN L9"/>
    <property type="match status" value="1"/>
</dbReference>
<dbReference type="Pfam" id="PF03948">
    <property type="entry name" value="Ribosomal_L9_C"/>
    <property type="match status" value="1"/>
</dbReference>
<dbReference type="Pfam" id="PF01281">
    <property type="entry name" value="Ribosomal_L9_N"/>
    <property type="match status" value="1"/>
</dbReference>
<dbReference type="SUPFAM" id="SSF55658">
    <property type="entry name" value="L9 N-domain-like"/>
    <property type="match status" value="1"/>
</dbReference>
<dbReference type="SUPFAM" id="SSF55653">
    <property type="entry name" value="Ribosomal protein L9 C-domain"/>
    <property type="match status" value="1"/>
</dbReference>
<dbReference type="PROSITE" id="PS00651">
    <property type="entry name" value="RIBOSOMAL_L9"/>
    <property type="match status" value="1"/>
</dbReference>
<proteinExistence type="inferred from homology"/>
<evidence type="ECO:0000255" key="1">
    <source>
        <dbReference type="HAMAP-Rule" id="MF_00503"/>
    </source>
</evidence>
<evidence type="ECO:0000256" key="2">
    <source>
        <dbReference type="SAM" id="MobiDB-lite"/>
    </source>
</evidence>
<evidence type="ECO:0000305" key="3"/>
<comment type="function">
    <text evidence="1">Binds to the 23S rRNA.</text>
</comment>
<comment type="similarity">
    <text evidence="1">Belongs to the bacterial ribosomal protein bL9 family.</text>
</comment>